<gene>
    <name evidence="1" type="primary">ybjQ</name>
    <name type="ordered locus">SNSL254_A0965</name>
</gene>
<protein>
    <recommendedName>
        <fullName evidence="1">UPF0145 protein YbjQ</fullName>
    </recommendedName>
</protein>
<sequence>MQFSTTPTLEGQSIVEYCGVVTGEAILGANIFRDFFAGIRDIVGGRSGAYEKELRKAREIAFQELGEQAKALGADAVVGIDIDYETVGKDGSMLMVSVSGTAVKTRR</sequence>
<dbReference type="EMBL" id="CP001113">
    <property type="protein sequence ID" value="ACF62162.1"/>
    <property type="molecule type" value="Genomic_DNA"/>
</dbReference>
<dbReference type="RefSeq" id="WP_001160725.1">
    <property type="nucleotide sequence ID" value="NZ_CCMR01000003.1"/>
</dbReference>
<dbReference type="SMR" id="B4T0F2"/>
<dbReference type="KEGG" id="see:SNSL254_A0965"/>
<dbReference type="HOGENOM" id="CLU_117144_3_0_6"/>
<dbReference type="Proteomes" id="UP000008824">
    <property type="component" value="Chromosome"/>
</dbReference>
<dbReference type="Gene3D" id="3.30.110.70">
    <property type="entry name" value="Hypothetical protein apc22750. Chain B"/>
    <property type="match status" value="1"/>
</dbReference>
<dbReference type="HAMAP" id="MF_00338">
    <property type="entry name" value="UPF0145"/>
    <property type="match status" value="1"/>
</dbReference>
<dbReference type="InterPro" id="IPR035439">
    <property type="entry name" value="UPF0145_dom_sf"/>
</dbReference>
<dbReference type="InterPro" id="IPR002765">
    <property type="entry name" value="UPF0145_YbjQ-like"/>
</dbReference>
<dbReference type="NCBIfam" id="NF002776">
    <property type="entry name" value="PRK02877.1"/>
    <property type="match status" value="1"/>
</dbReference>
<dbReference type="PANTHER" id="PTHR34068">
    <property type="entry name" value="UPF0145 PROTEIN YBJQ"/>
    <property type="match status" value="1"/>
</dbReference>
<dbReference type="PANTHER" id="PTHR34068:SF1">
    <property type="entry name" value="UPF0145 PROTEIN YBJQ"/>
    <property type="match status" value="1"/>
</dbReference>
<dbReference type="Pfam" id="PF01906">
    <property type="entry name" value="YbjQ_1"/>
    <property type="match status" value="1"/>
</dbReference>
<dbReference type="SUPFAM" id="SSF117782">
    <property type="entry name" value="YbjQ-like"/>
    <property type="match status" value="1"/>
</dbReference>
<proteinExistence type="inferred from homology"/>
<evidence type="ECO:0000255" key="1">
    <source>
        <dbReference type="HAMAP-Rule" id="MF_00338"/>
    </source>
</evidence>
<comment type="similarity">
    <text evidence="1">Belongs to the UPF0145 family.</text>
</comment>
<feature type="chain" id="PRO_1000120014" description="UPF0145 protein YbjQ">
    <location>
        <begin position="1"/>
        <end position="107"/>
    </location>
</feature>
<organism>
    <name type="scientific">Salmonella newport (strain SL254)</name>
    <dbReference type="NCBI Taxonomy" id="423368"/>
    <lineage>
        <taxon>Bacteria</taxon>
        <taxon>Pseudomonadati</taxon>
        <taxon>Pseudomonadota</taxon>
        <taxon>Gammaproteobacteria</taxon>
        <taxon>Enterobacterales</taxon>
        <taxon>Enterobacteriaceae</taxon>
        <taxon>Salmonella</taxon>
    </lineage>
</organism>
<name>YBJQ_SALNS</name>
<accession>B4T0F2</accession>
<reference key="1">
    <citation type="journal article" date="2011" name="J. Bacteriol.">
        <title>Comparative genomics of 28 Salmonella enterica isolates: evidence for CRISPR-mediated adaptive sublineage evolution.</title>
        <authorList>
            <person name="Fricke W.F."/>
            <person name="Mammel M.K."/>
            <person name="McDermott P.F."/>
            <person name="Tartera C."/>
            <person name="White D.G."/>
            <person name="Leclerc J.E."/>
            <person name="Ravel J."/>
            <person name="Cebula T.A."/>
        </authorList>
    </citation>
    <scope>NUCLEOTIDE SEQUENCE [LARGE SCALE GENOMIC DNA]</scope>
    <source>
        <strain>SL254</strain>
    </source>
</reference>